<sequence>MSGAKQCPDCGSSDIVEDAHYSQDQVVCADCGCILSEGLITTTAAEESHLQAVRFADSTGENDSMTVSKLRGIVRVRNICRVLRLPDGFSDTAVSYYEQAYKHPLYHSVSIEKKEIIVGCCVYITCRQHQWPITMATICSLVYAKKELFASIFLSIVQVLKLDVPSVSLQNLVMSHCRSFKLFKDSCEVPSHYAEKLDTVSERTVQTVELAYETWLVTGRHPIPIITAAAYISWQSLLPARRLSCSLSRFCKLSDVDLPPPSAIRLRELQGTLIKLSVYLPWLKVLSLNKKTVVQHLGDLLRHRVFLLRKALAVTEAELSRGTLADTEAQLSRGTLADTEAQLSRGTLADTEAQLSRGTLADTEAQLSRGTLADTEAQLSRGTLADTEAQLSRGTLADTEAQLSRGTLADTEAQLSRGTLADTVAQLSRGTLADTEAQLSRGTKALSSNDQPNSTFVFLPPCVSNPRKRSRSIPFPRGHLDITGDEDISDSEIEQYLRTPAEMKEFEQALNRDDELPNA</sequence>
<proteinExistence type="evidence at transcript level"/>
<feature type="chain" id="PRO_0000337193" description="Transcription factor IIIB 50 kDa subunit">
    <location>
        <begin position="1"/>
        <end position="519"/>
    </location>
</feature>
<feature type="repeat" description="2">
    <location>
        <begin position="173"/>
        <end position="249"/>
    </location>
</feature>
<feature type="zinc finger region" description="TFIIB-type" evidence="2">
    <location>
        <begin position="3"/>
        <end position="36"/>
    </location>
</feature>
<feature type="region of interest" description="Disordered" evidence="3">
    <location>
        <begin position="465"/>
        <end position="487"/>
    </location>
</feature>
<feature type="binding site" evidence="2">
    <location>
        <position position="7"/>
    </location>
    <ligand>
        <name>Zn(2+)</name>
        <dbReference type="ChEBI" id="CHEBI:29105"/>
    </ligand>
</feature>
<feature type="binding site" evidence="2">
    <location>
        <position position="10"/>
    </location>
    <ligand>
        <name>Zn(2+)</name>
        <dbReference type="ChEBI" id="CHEBI:29105"/>
    </ligand>
</feature>
<feature type="binding site" evidence="2">
    <location>
        <position position="28"/>
    </location>
    <ligand>
        <name>Zn(2+)</name>
        <dbReference type="ChEBI" id="CHEBI:29105"/>
    </ligand>
</feature>
<feature type="binding site" evidence="2">
    <location>
        <position position="31"/>
    </location>
    <ligand>
        <name>Zn(2+)</name>
        <dbReference type="ChEBI" id="CHEBI:29105"/>
    </ligand>
</feature>
<feature type="modified residue" description="Cysteine sulfenic acid (-SOH)" evidence="1">
    <location>
        <position position="462"/>
    </location>
</feature>
<reference key="1">
    <citation type="submission" date="2007-03" db="EMBL/GenBank/DDBJ databases">
        <authorList>
            <consortium name="NIH - Xenopus Gene Collection (XGC) project"/>
        </authorList>
    </citation>
    <scope>NUCLEOTIDE SEQUENCE [LARGE SCALE MRNA]</scope>
    <source>
        <tissue>Brain</tissue>
    </source>
</reference>
<keyword id="KW-0010">Activator</keyword>
<keyword id="KW-0479">Metal-binding</keyword>
<keyword id="KW-0539">Nucleus</keyword>
<keyword id="KW-0558">Oxidation</keyword>
<keyword id="KW-1185">Reference proteome</keyword>
<keyword id="KW-0677">Repeat</keyword>
<keyword id="KW-0804">Transcription</keyword>
<keyword id="KW-0805">Transcription regulation</keyword>
<keyword id="KW-0862">Zinc</keyword>
<keyword id="KW-0863">Zinc-finger</keyword>
<evidence type="ECO:0000250" key="1">
    <source>
        <dbReference type="UniProtKB" id="Q9HAW0"/>
    </source>
</evidence>
<evidence type="ECO:0000255" key="2">
    <source>
        <dbReference type="PROSITE-ProRule" id="PRU00469"/>
    </source>
</evidence>
<evidence type="ECO:0000256" key="3">
    <source>
        <dbReference type="SAM" id="MobiDB-lite"/>
    </source>
</evidence>
<evidence type="ECO:0000305" key="4"/>
<accession>A4QNR3</accession>
<organism>
    <name type="scientific">Xenopus tropicalis</name>
    <name type="common">Western clawed frog</name>
    <name type="synonym">Silurana tropicalis</name>
    <dbReference type="NCBI Taxonomy" id="8364"/>
    <lineage>
        <taxon>Eukaryota</taxon>
        <taxon>Metazoa</taxon>
        <taxon>Chordata</taxon>
        <taxon>Craniata</taxon>
        <taxon>Vertebrata</taxon>
        <taxon>Euteleostomi</taxon>
        <taxon>Amphibia</taxon>
        <taxon>Batrachia</taxon>
        <taxon>Anura</taxon>
        <taxon>Pipoidea</taxon>
        <taxon>Pipidae</taxon>
        <taxon>Xenopodinae</taxon>
        <taxon>Xenopus</taxon>
        <taxon>Silurana</taxon>
    </lineage>
</organism>
<name>BRF2_XENTR</name>
<gene>
    <name type="primary">brf2</name>
</gene>
<dbReference type="EMBL" id="BC136234">
    <property type="protein sequence ID" value="AAI36235.1"/>
    <property type="molecule type" value="mRNA"/>
</dbReference>
<dbReference type="RefSeq" id="NP_001096549.1">
    <property type="nucleotide sequence ID" value="NM_001103079.1"/>
</dbReference>
<dbReference type="SMR" id="A4QNR3"/>
<dbReference type="FunCoup" id="A4QNR3">
    <property type="interactions" value="852"/>
</dbReference>
<dbReference type="STRING" id="8364.ENSXETP00000042918"/>
<dbReference type="PaxDb" id="8364-ENSXETP00000060533"/>
<dbReference type="DNASU" id="100125194"/>
<dbReference type="GeneID" id="100125194"/>
<dbReference type="KEGG" id="xtr:100125194"/>
<dbReference type="AGR" id="Xenbase:XB-GENE-964408"/>
<dbReference type="CTD" id="55290"/>
<dbReference type="Xenbase" id="XB-GENE-964408">
    <property type="gene designation" value="brf2"/>
</dbReference>
<dbReference type="eggNOG" id="KOG1598">
    <property type="taxonomic scope" value="Eukaryota"/>
</dbReference>
<dbReference type="InParanoid" id="A4QNR3"/>
<dbReference type="OrthoDB" id="2121711at2759"/>
<dbReference type="Proteomes" id="UP000008143">
    <property type="component" value="Chromosome 3"/>
</dbReference>
<dbReference type="GO" id="GO:0005634">
    <property type="term" value="C:nucleus"/>
    <property type="evidence" value="ECO:0007669"/>
    <property type="project" value="UniProtKB-SubCell"/>
</dbReference>
<dbReference type="GO" id="GO:0000126">
    <property type="term" value="C:transcription factor TFIIIB complex"/>
    <property type="evidence" value="ECO:0000250"/>
    <property type="project" value="UniProtKB"/>
</dbReference>
<dbReference type="GO" id="GO:0001006">
    <property type="term" value="F:RNA polymerase III type 3 promoter sequence-specific DNA binding"/>
    <property type="evidence" value="ECO:0000250"/>
    <property type="project" value="UniProtKB"/>
</dbReference>
<dbReference type="GO" id="GO:0017025">
    <property type="term" value="F:TBP-class protein binding"/>
    <property type="evidence" value="ECO:0007669"/>
    <property type="project" value="InterPro"/>
</dbReference>
<dbReference type="GO" id="GO:0008270">
    <property type="term" value="F:zinc ion binding"/>
    <property type="evidence" value="ECO:0007669"/>
    <property type="project" value="UniProtKB-KW"/>
</dbReference>
<dbReference type="GO" id="GO:0034599">
    <property type="term" value="P:cellular response to oxidative stress"/>
    <property type="evidence" value="ECO:0000250"/>
    <property type="project" value="UniProtKB"/>
</dbReference>
<dbReference type="GO" id="GO:0006359">
    <property type="term" value="P:regulation of transcription by RNA polymerase III"/>
    <property type="evidence" value="ECO:0000250"/>
    <property type="project" value="UniProtKB"/>
</dbReference>
<dbReference type="GO" id="GO:0070897">
    <property type="term" value="P:transcription preinitiation complex assembly"/>
    <property type="evidence" value="ECO:0007669"/>
    <property type="project" value="InterPro"/>
</dbReference>
<dbReference type="CDD" id="cd20555">
    <property type="entry name" value="CYCLIN_BRF2"/>
    <property type="match status" value="1"/>
</dbReference>
<dbReference type="FunFam" id="1.10.472.10:FF:000046">
    <property type="entry name" value="Transcription factor IIIB 50 kDa subunit"/>
    <property type="match status" value="1"/>
</dbReference>
<dbReference type="FunFam" id="2.20.25.10:FF:000014">
    <property type="entry name" value="Transcription factor IIIB 50 kDa subunit"/>
    <property type="match status" value="1"/>
</dbReference>
<dbReference type="Gene3D" id="2.20.25.10">
    <property type="match status" value="1"/>
</dbReference>
<dbReference type="Gene3D" id="1.10.472.10">
    <property type="entry name" value="Cyclin-like"/>
    <property type="match status" value="2"/>
</dbReference>
<dbReference type="InterPro" id="IPR054078">
    <property type="entry name" value="BRF2-like_C"/>
</dbReference>
<dbReference type="InterPro" id="IPR036915">
    <property type="entry name" value="Cyclin-like_sf"/>
</dbReference>
<dbReference type="InterPro" id="IPR000812">
    <property type="entry name" value="TFIIB"/>
</dbReference>
<dbReference type="InterPro" id="IPR013150">
    <property type="entry name" value="TFIIB_cyclin"/>
</dbReference>
<dbReference type="InterPro" id="IPR013137">
    <property type="entry name" value="Znf_TFIIB"/>
</dbReference>
<dbReference type="PANTHER" id="PTHR11618:SF5">
    <property type="entry name" value="TRANSCRIPTION FACTOR IIIB 50 KDA SUBUNIT"/>
    <property type="match status" value="1"/>
</dbReference>
<dbReference type="PANTHER" id="PTHR11618">
    <property type="entry name" value="TRANSCRIPTION INITIATION FACTOR IIB-RELATED"/>
    <property type="match status" value="1"/>
</dbReference>
<dbReference type="Pfam" id="PF21886">
    <property type="entry name" value="BRF2-like_C_cyclin_rpt"/>
    <property type="match status" value="1"/>
</dbReference>
<dbReference type="Pfam" id="PF00382">
    <property type="entry name" value="TFIIB"/>
    <property type="match status" value="1"/>
</dbReference>
<dbReference type="Pfam" id="PF08271">
    <property type="entry name" value="Zn_Ribbon_TF"/>
    <property type="match status" value="1"/>
</dbReference>
<dbReference type="SUPFAM" id="SSF47954">
    <property type="entry name" value="Cyclin-like"/>
    <property type="match status" value="1"/>
</dbReference>
<dbReference type="SUPFAM" id="SSF57783">
    <property type="entry name" value="Zinc beta-ribbon"/>
    <property type="match status" value="1"/>
</dbReference>
<dbReference type="PROSITE" id="PS51134">
    <property type="entry name" value="ZF_TFIIB"/>
    <property type="match status" value="1"/>
</dbReference>
<comment type="function">
    <text evidence="1">General activator of RNA polymerase III transcription. Factor exclusively required for RNA polymerase III transcription of genes with promoter elements upstream of the initiation sites. Contributes to the regulation of gene expression; functions as activator in the absence of oxidative stress. Down-regulates expression of target genes in response to oxidative stress. Overexpression protects cells against apoptosis in response to oxidative stress.</text>
</comment>
<comment type="subunit">
    <text evidence="1">Component of TFIIIB complexes. Interacts with TBP and forms a ternary complex with TBp and target DNA sequences.</text>
</comment>
<comment type="subcellular location">
    <subcellularLocation>
        <location evidence="1">Nucleus</location>
    </subcellularLocation>
</comment>
<comment type="PTM">
    <text evidence="1">In response to oxidative stress, a Cys-residue is reversibly oxidized to cysteine sulfenic acid. This impairs formation of a ternary complex with TBP and DNA and down-regulates expression of target genes in response to oxidative stress.</text>
</comment>
<comment type="similarity">
    <text evidence="4">Belongs to the TFIIB family.</text>
</comment>
<protein>
    <recommendedName>
        <fullName>Transcription factor IIIB 50 kDa subunit</fullName>
    </recommendedName>
    <alternativeName>
        <fullName>B-related factor 2</fullName>
        <shortName>BRF-2</shortName>
    </alternativeName>
</protein>